<accession>Q2UAZ8</accession>
<comment type="function">
    <text evidence="4 7">Cytochrome P450 monooxygenase; part of the gene cluster that mediates the biosynthesis of 2,4'-dihydroxy-3'-methoxypropiophenone (PubMed:32885554). The first step of the pathway is the conversion of acetate into acetyl-CoA by the acyl-CoA ligase ppsA (PubMed:32885554). Acetyl-CoA is then used as a starter unit by the polyketide synthase ppsB and condensed with 4 malonyl-CoA unit to produce the pentaketide backbone (PubMed:32885554). During polyketide extension, the polykedite chain is probably reduced and dehydrated by the KR and PT domains, respectively (Probable). O-methylation seems to be catalyzed by an unknown methyltransferase rather than by the CMeT domain of ppsB (Probable). Two hydroxylations and one further decarboxylation step catalyzed by yet unknown enzymes are then required to yield 4'-hydroxy-3'-methoxypropiophenone (Probable). PpsC functions as a carrier protein to transport 4'-hydroxy-3'-methoxypropiophenone to a specific cell compartment in which 4'-hydroxy-3'-methoxypropiophenone is hydroxylated to 2,4'-dihydroxy-3'-methoxypropiophenone by a still to be identified enzyme (PubMed:32885554).</text>
</comment>
<comment type="cofactor">
    <cofactor evidence="1">
        <name>heme</name>
        <dbReference type="ChEBI" id="CHEBI:30413"/>
    </cofactor>
</comment>
<comment type="subcellular location">
    <subcellularLocation>
        <location evidence="2">Membrane</location>
        <topology evidence="2">Single-pass membrane protein</topology>
    </subcellularLocation>
</comment>
<comment type="disruption phenotype">
    <text evidence="4">Does not affecct the production of 2,4'-dihydroxy-3'-methoxypropiophenone or 4'-hydroxy-3'-methoxypropiophenone.</text>
</comment>
<comment type="similarity">
    <text evidence="6">Belongs to the cytochrome P450 family.</text>
</comment>
<name>PPSD_ASPOR</name>
<evidence type="ECO:0000250" key="1">
    <source>
        <dbReference type="UniProtKB" id="P04798"/>
    </source>
</evidence>
<evidence type="ECO:0000255" key="2"/>
<evidence type="ECO:0000255" key="3">
    <source>
        <dbReference type="PROSITE-ProRule" id="PRU00498"/>
    </source>
</evidence>
<evidence type="ECO:0000269" key="4">
    <source>
    </source>
</evidence>
<evidence type="ECO:0000303" key="5">
    <source>
    </source>
</evidence>
<evidence type="ECO:0000305" key="6"/>
<evidence type="ECO:0000305" key="7">
    <source>
    </source>
</evidence>
<gene>
    <name evidence="5" type="primary">ppsD</name>
    <name type="ORF">AO090102000168</name>
</gene>
<protein>
    <recommendedName>
        <fullName evidence="5">Cytochrome P450 monooxygenase ppsD</fullName>
        <ecNumber evidence="7">1.-.-.-</ecNumber>
    </recommendedName>
    <alternativeName>
        <fullName evidence="5">2,4'-dihydroxy-3'-methoxypropiophenone biosynthesis cluster protein D</fullName>
    </alternativeName>
</protein>
<feature type="chain" id="PRO_0000451836" description="Cytochrome P450 monooxygenase ppsD">
    <location>
        <begin position="1"/>
        <end position="528"/>
    </location>
</feature>
<feature type="transmembrane region" description="Helical" evidence="2">
    <location>
        <begin position="2"/>
        <end position="21"/>
    </location>
</feature>
<feature type="binding site" description="axial binding residue" evidence="1">
    <location>
        <position position="441"/>
    </location>
    <ligand>
        <name>heme</name>
        <dbReference type="ChEBI" id="CHEBI:30413"/>
    </ligand>
    <ligandPart>
        <name>Fe</name>
        <dbReference type="ChEBI" id="CHEBI:18248"/>
    </ligandPart>
</feature>
<feature type="glycosylation site" description="N-linked (GlcNAc...) asparagine" evidence="3">
    <location>
        <position position="137"/>
    </location>
</feature>
<feature type="glycosylation site" description="N-linked (GlcNAc...) asparagine" evidence="3">
    <location>
        <position position="450"/>
    </location>
</feature>
<feature type="glycosylation site" description="N-linked (GlcNAc...) asparagine" evidence="3">
    <location>
        <position position="463"/>
    </location>
</feature>
<keyword id="KW-0325">Glycoprotein</keyword>
<keyword id="KW-0349">Heme</keyword>
<keyword id="KW-0408">Iron</keyword>
<keyword id="KW-0472">Membrane</keyword>
<keyword id="KW-0479">Metal-binding</keyword>
<keyword id="KW-0503">Monooxygenase</keyword>
<keyword id="KW-0560">Oxidoreductase</keyword>
<keyword id="KW-1185">Reference proteome</keyword>
<keyword id="KW-0812">Transmembrane</keyword>
<keyword id="KW-1133">Transmembrane helix</keyword>
<sequence length="528" mass="59895">MLVLVSLVLCLTGFCLLQWALKERKIVKGLPPGPRPKPIIGNLLDLPPPGALDWLHWLKHKELYGPISSVTIFGQTIIIINGHRVANELMEKRSGVHSSRPHVPIAELAGWQYTLGFIPYDSRLRAYRRALHQEMGNATSISKYHNILDMETHRLLFRILKTPDCLMQHLRKEAGSIILRITYGYITEPEAYDPLIDLVDKAMEDFAQVILPGGWLVNFIPMLKYLPSWFPGCDWQRRAKAFKQRAKAMTDIPYAFVKQQHEQQKHIPSYVSRLLEQNNIKLGSEEELVVKWSAQSIYGGGAETSVSVFACFFQVMALHLNVQKKAQEEIDRVVGASRLPDLSDCKNLPYINAVVKEVLRWHPVAPMGVAHASSKEDIYHRYVIPKGAILVPNIWAMAHDPDFYHNAMDFEPERFLKSGRNEQNPEYDPHQFIFGFGRRTCPGQHLVSANLSLGVARVLAVFNITNAVRDGKKVPISPEFSPGVISRPAPFELSIQVRNAECKRLIEAVGMKFPWEESHAEALAQLRI</sequence>
<proteinExistence type="inferred from homology"/>
<reference key="1">
    <citation type="journal article" date="2005" name="Nature">
        <title>Genome sequencing and analysis of Aspergillus oryzae.</title>
        <authorList>
            <person name="Machida M."/>
            <person name="Asai K."/>
            <person name="Sano M."/>
            <person name="Tanaka T."/>
            <person name="Kumagai T."/>
            <person name="Terai G."/>
            <person name="Kusumoto K."/>
            <person name="Arima T."/>
            <person name="Akita O."/>
            <person name="Kashiwagi Y."/>
            <person name="Abe K."/>
            <person name="Gomi K."/>
            <person name="Horiuchi H."/>
            <person name="Kitamoto K."/>
            <person name="Kobayashi T."/>
            <person name="Takeuchi M."/>
            <person name="Denning D.W."/>
            <person name="Galagan J.E."/>
            <person name="Nierman W.C."/>
            <person name="Yu J."/>
            <person name="Archer D.B."/>
            <person name="Bennett J.W."/>
            <person name="Bhatnagar D."/>
            <person name="Cleveland T.E."/>
            <person name="Fedorova N.D."/>
            <person name="Gotoh O."/>
            <person name="Horikawa H."/>
            <person name="Hosoyama A."/>
            <person name="Ichinomiya M."/>
            <person name="Igarashi R."/>
            <person name="Iwashita K."/>
            <person name="Juvvadi P.R."/>
            <person name="Kato M."/>
            <person name="Kato Y."/>
            <person name="Kin T."/>
            <person name="Kokubun A."/>
            <person name="Maeda H."/>
            <person name="Maeyama N."/>
            <person name="Maruyama J."/>
            <person name="Nagasaki H."/>
            <person name="Nakajima T."/>
            <person name="Oda K."/>
            <person name="Okada K."/>
            <person name="Paulsen I."/>
            <person name="Sakamoto K."/>
            <person name="Sawano T."/>
            <person name="Takahashi M."/>
            <person name="Takase K."/>
            <person name="Terabayashi Y."/>
            <person name="Wortman J.R."/>
            <person name="Yamada O."/>
            <person name="Yamagata Y."/>
            <person name="Anazawa H."/>
            <person name="Hata Y."/>
            <person name="Koide Y."/>
            <person name="Komori T."/>
            <person name="Koyama Y."/>
            <person name="Minetoki T."/>
            <person name="Suharnan S."/>
            <person name="Tanaka A."/>
            <person name="Isono K."/>
            <person name="Kuhara S."/>
            <person name="Ogasawara N."/>
            <person name="Kikuchi H."/>
        </authorList>
    </citation>
    <scope>NUCLEOTIDE SEQUENCE [LARGE SCALE GENOMIC DNA]</scope>
    <source>
        <strain>ATCC 42149 / RIB 40</strain>
    </source>
</reference>
<reference key="2">
    <citation type="journal article" date="2021" name="ChemBioChem">
        <title>Discovery of the 2,4'-dihydroxy-3'-methoxypropiophenone biosynthesis genes in Aspergillus oryzae.</title>
        <authorList>
            <person name="Kan E."/>
            <person name="Tomita H."/>
            <person name="Katsuyama Y."/>
            <person name="Maruyama J.I."/>
            <person name="Koyama Y."/>
            <person name="Ohnishi Y."/>
        </authorList>
    </citation>
    <scope>FUNCTION</scope>
    <scope>DISRUPTION PHENOTYPE</scope>
</reference>
<organism>
    <name type="scientific">Aspergillus oryzae (strain ATCC 42149 / RIB 40)</name>
    <name type="common">Yellow koji mold</name>
    <dbReference type="NCBI Taxonomy" id="510516"/>
    <lineage>
        <taxon>Eukaryota</taxon>
        <taxon>Fungi</taxon>
        <taxon>Dikarya</taxon>
        <taxon>Ascomycota</taxon>
        <taxon>Pezizomycotina</taxon>
        <taxon>Eurotiomycetes</taxon>
        <taxon>Eurotiomycetidae</taxon>
        <taxon>Eurotiales</taxon>
        <taxon>Aspergillaceae</taxon>
        <taxon>Aspergillus</taxon>
        <taxon>Aspergillus subgen. Circumdati</taxon>
    </lineage>
</organism>
<dbReference type="EC" id="1.-.-.-" evidence="7"/>
<dbReference type="EMBL" id="BA000052">
    <property type="protein sequence ID" value="BAE61267.1"/>
    <property type="molecule type" value="Genomic_DNA"/>
</dbReference>
<dbReference type="RefSeq" id="XP_001822400.1">
    <property type="nucleotide sequence ID" value="XM_001822348.1"/>
</dbReference>
<dbReference type="SMR" id="Q2UAZ8"/>
<dbReference type="GlyCosmos" id="Q2UAZ8">
    <property type="glycosylation" value="3 sites, No reported glycans"/>
</dbReference>
<dbReference type="EnsemblFungi" id="BAE61267">
    <property type="protein sequence ID" value="BAE61267"/>
    <property type="gene ID" value="AO090102000168"/>
</dbReference>
<dbReference type="GeneID" id="5994445"/>
<dbReference type="KEGG" id="aor:AO090102000168"/>
<dbReference type="VEuPathDB" id="FungiDB:AO090102000168"/>
<dbReference type="HOGENOM" id="CLU_001570_2_3_1"/>
<dbReference type="OMA" id="IPPTYKL"/>
<dbReference type="OrthoDB" id="133536at5052"/>
<dbReference type="Proteomes" id="UP000006564">
    <property type="component" value="Chromosome 4"/>
</dbReference>
<dbReference type="GO" id="GO:0016020">
    <property type="term" value="C:membrane"/>
    <property type="evidence" value="ECO:0007669"/>
    <property type="project" value="UniProtKB-SubCell"/>
</dbReference>
<dbReference type="GO" id="GO:0020037">
    <property type="term" value="F:heme binding"/>
    <property type="evidence" value="ECO:0007669"/>
    <property type="project" value="InterPro"/>
</dbReference>
<dbReference type="GO" id="GO:0005506">
    <property type="term" value="F:iron ion binding"/>
    <property type="evidence" value="ECO:0007669"/>
    <property type="project" value="InterPro"/>
</dbReference>
<dbReference type="GO" id="GO:0004497">
    <property type="term" value="F:monooxygenase activity"/>
    <property type="evidence" value="ECO:0007669"/>
    <property type="project" value="UniProtKB-KW"/>
</dbReference>
<dbReference type="GO" id="GO:0016705">
    <property type="term" value="F:oxidoreductase activity, acting on paired donors, with incorporation or reduction of molecular oxygen"/>
    <property type="evidence" value="ECO:0007669"/>
    <property type="project" value="InterPro"/>
</dbReference>
<dbReference type="CDD" id="cd11065">
    <property type="entry name" value="CYP64-like"/>
    <property type="match status" value="1"/>
</dbReference>
<dbReference type="Gene3D" id="1.10.630.10">
    <property type="entry name" value="Cytochrome P450"/>
    <property type="match status" value="1"/>
</dbReference>
<dbReference type="InterPro" id="IPR001128">
    <property type="entry name" value="Cyt_P450"/>
</dbReference>
<dbReference type="InterPro" id="IPR017972">
    <property type="entry name" value="Cyt_P450_CS"/>
</dbReference>
<dbReference type="InterPro" id="IPR002401">
    <property type="entry name" value="Cyt_P450_E_grp-I"/>
</dbReference>
<dbReference type="InterPro" id="IPR036396">
    <property type="entry name" value="Cyt_P450_sf"/>
</dbReference>
<dbReference type="InterPro" id="IPR050364">
    <property type="entry name" value="Cytochrome_P450_fung"/>
</dbReference>
<dbReference type="PANTHER" id="PTHR46300:SF7">
    <property type="entry name" value="P450, PUTATIVE (EUROFUNG)-RELATED"/>
    <property type="match status" value="1"/>
</dbReference>
<dbReference type="PANTHER" id="PTHR46300">
    <property type="entry name" value="P450, PUTATIVE (EUROFUNG)-RELATED-RELATED"/>
    <property type="match status" value="1"/>
</dbReference>
<dbReference type="Pfam" id="PF00067">
    <property type="entry name" value="p450"/>
    <property type="match status" value="1"/>
</dbReference>
<dbReference type="PRINTS" id="PR00463">
    <property type="entry name" value="EP450I"/>
</dbReference>
<dbReference type="PRINTS" id="PR00385">
    <property type="entry name" value="P450"/>
</dbReference>
<dbReference type="SUPFAM" id="SSF48264">
    <property type="entry name" value="Cytochrome P450"/>
    <property type="match status" value="1"/>
</dbReference>
<dbReference type="PROSITE" id="PS00086">
    <property type="entry name" value="CYTOCHROME_P450"/>
    <property type="match status" value="1"/>
</dbReference>